<keyword id="KW-0067">ATP-binding</keyword>
<keyword id="KW-0418">Kinase</keyword>
<keyword id="KW-0441">Lipid A biosynthesis</keyword>
<keyword id="KW-0444">Lipid biosynthesis</keyword>
<keyword id="KW-0443">Lipid metabolism</keyword>
<keyword id="KW-0547">Nucleotide-binding</keyword>
<keyword id="KW-1185">Reference proteome</keyword>
<keyword id="KW-0808">Transferase</keyword>
<evidence type="ECO:0000255" key="1">
    <source>
        <dbReference type="HAMAP-Rule" id="MF_00409"/>
    </source>
</evidence>
<dbReference type="EC" id="2.7.1.130" evidence="1"/>
<dbReference type="EMBL" id="CP000478">
    <property type="protein sequence ID" value="ABK16046.1"/>
    <property type="molecule type" value="Genomic_DNA"/>
</dbReference>
<dbReference type="RefSeq" id="WP_011697219.1">
    <property type="nucleotide sequence ID" value="NC_008554.1"/>
</dbReference>
<dbReference type="SMR" id="A0LF44"/>
<dbReference type="FunCoup" id="A0LF44">
    <property type="interactions" value="237"/>
</dbReference>
<dbReference type="STRING" id="335543.Sfum_0346"/>
<dbReference type="KEGG" id="sfu:Sfum_0346"/>
<dbReference type="eggNOG" id="COG1663">
    <property type="taxonomic scope" value="Bacteria"/>
</dbReference>
<dbReference type="HOGENOM" id="CLU_038816_6_0_7"/>
<dbReference type="InParanoid" id="A0LF44"/>
<dbReference type="OrthoDB" id="9766423at2"/>
<dbReference type="UniPathway" id="UPA00359">
    <property type="reaction ID" value="UER00482"/>
</dbReference>
<dbReference type="Proteomes" id="UP000001784">
    <property type="component" value="Chromosome"/>
</dbReference>
<dbReference type="GO" id="GO:0005886">
    <property type="term" value="C:plasma membrane"/>
    <property type="evidence" value="ECO:0007669"/>
    <property type="project" value="TreeGrafter"/>
</dbReference>
<dbReference type="GO" id="GO:0005524">
    <property type="term" value="F:ATP binding"/>
    <property type="evidence" value="ECO:0007669"/>
    <property type="project" value="UniProtKB-UniRule"/>
</dbReference>
<dbReference type="GO" id="GO:0009029">
    <property type="term" value="F:tetraacyldisaccharide 4'-kinase activity"/>
    <property type="evidence" value="ECO:0007669"/>
    <property type="project" value="UniProtKB-UniRule"/>
</dbReference>
<dbReference type="GO" id="GO:0009245">
    <property type="term" value="P:lipid A biosynthetic process"/>
    <property type="evidence" value="ECO:0007669"/>
    <property type="project" value="UniProtKB-UniRule"/>
</dbReference>
<dbReference type="GO" id="GO:0009244">
    <property type="term" value="P:lipopolysaccharide core region biosynthetic process"/>
    <property type="evidence" value="ECO:0007669"/>
    <property type="project" value="TreeGrafter"/>
</dbReference>
<dbReference type="HAMAP" id="MF_00409">
    <property type="entry name" value="LpxK"/>
    <property type="match status" value="1"/>
</dbReference>
<dbReference type="InterPro" id="IPR003758">
    <property type="entry name" value="LpxK"/>
</dbReference>
<dbReference type="InterPro" id="IPR027417">
    <property type="entry name" value="P-loop_NTPase"/>
</dbReference>
<dbReference type="NCBIfam" id="TIGR00682">
    <property type="entry name" value="lpxK"/>
    <property type="match status" value="1"/>
</dbReference>
<dbReference type="PANTHER" id="PTHR42724">
    <property type="entry name" value="TETRAACYLDISACCHARIDE 4'-KINASE"/>
    <property type="match status" value="1"/>
</dbReference>
<dbReference type="PANTHER" id="PTHR42724:SF1">
    <property type="entry name" value="TETRAACYLDISACCHARIDE 4'-KINASE, MITOCHONDRIAL-RELATED"/>
    <property type="match status" value="1"/>
</dbReference>
<dbReference type="Pfam" id="PF02606">
    <property type="entry name" value="LpxK"/>
    <property type="match status" value="1"/>
</dbReference>
<dbReference type="SUPFAM" id="SSF52540">
    <property type="entry name" value="P-loop containing nucleoside triphosphate hydrolases"/>
    <property type="match status" value="1"/>
</dbReference>
<reference key="1">
    <citation type="submission" date="2006-10" db="EMBL/GenBank/DDBJ databases">
        <title>Complete sequence of Syntrophobacter fumaroxidans MPOB.</title>
        <authorList>
            <consortium name="US DOE Joint Genome Institute"/>
            <person name="Copeland A."/>
            <person name="Lucas S."/>
            <person name="Lapidus A."/>
            <person name="Barry K."/>
            <person name="Detter J.C."/>
            <person name="Glavina del Rio T."/>
            <person name="Hammon N."/>
            <person name="Israni S."/>
            <person name="Pitluck S."/>
            <person name="Goltsman E.G."/>
            <person name="Martinez M."/>
            <person name="Schmutz J."/>
            <person name="Larimer F."/>
            <person name="Land M."/>
            <person name="Hauser L."/>
            <person name="Kyrpides N."/>
            <person name="Kim E."/>
            <person name="Boone D.R."/>
            <person name="Brockman F."/>
            <person name="Culley D."/>
            <person name="Ferry J."/>
            <person name="Gunsalus R."/>
            <person name="McInerney M.J."/>
            <person name="Morrison M."/>
            <person name="Plugge C."/>
            <person name="Rohlin L."/>
            <person name="Scholten J."/>
            <person name="Sieber J."/>
            <person name="Stams A.J.M."/>
            <person name="Worm P."/>
            <person name="Henstra A.M."/>
            <person name="Richardson P."/>
        </authorList>
    </citation>
    <scope>NUCLEOTIDE SEQUENCE [LARGE SCALE GENOMIC DNA]</scope>
    <source>
        <strain>DSM 10017 / MPOB</strain>
    </source>
</reference>
<protein>
    <recommendedName>
        <fullName evidence="1">Tetraacyldisaccharide 4'-kinase</fullName>
        <ecNumber evidence="1">2.7.1.130</ecNumber>
    </recommendedName>
    <alternativeName>
        <fullName evidence="1">Lipid A 4'-kinase</fullName>
    </alternativeName>
</protein>
<proteinExistence type="inferred from homology"/>
<sequence length="381" mass="42058">MQTSIILGTGRFQAIRRLSARVRRLWYSAPETLRGGPLLSAIKLTSMTYRAGFEMDRRRSRFRRRRLPAYVVSVGNLAVGGTGKTPLTLWLARYFKNGGRRVAVLSRGYGRSGSAPGRVPSSGELSVLALEYGDEPAMLALELGDTPVYVGKHRWESGILAIESSRADLVILDDGFQHHALERDLDLVLLDASNPFGNGFTLPLGPLREPKAHLARAHAIVLTRAVEPESVARTRAQLDKAFPDKPVFAAQHILRGFHAGLGGAVVPLRSMVARPAVAFAGIADPKSFFSLLEALEIDLRMAFAFPDHHRPTARDTAALFDAVRACSADLLITTQKDAVRLPGFLRRVVCVPDLEIDFGEDETRFRRFLDRETRGRQAMPE</sequence>
<accession>A0LF44</accession>
<comment type="function">
    <text evidence="1">Transfers the gamma-phosphate of ATP to the 4'-position of a tetraacyldisaccharide 1-phosphate intermediate (termed DS-1-P) to form tetraacyldisaccharide 1,4'-bis-phosphate (lipid IVA).</text>
</comment>
<comment type="catalytic activity">
    <reaction evidence="1">
        <text>a lipid A disaccharide + ATP = a lipid IVA + ADP + H(+)</text>
        <dbReference type="Rhea" id="RHEA:67840"/>
        <dbReference type="ChEBI" id="CHEBI:15378"/>
        <dbReference type="ChEBI" id="CHEBI:30616"/>
        <dbReference type="ChEBI" id="CHEBI:176343"/>
        <dbReference type="ChEBI" id="CHEBI:176425"/>
        <dbReference type="ChEBI" id="CHEBI:456216"/>
        <dbReference type="EC" id="2.7.1.130"/>
    </reaction>
</comment>
<comment type="pathway">
    <text evidence="1">Glycolipid biosynthesis; lipid IV(A) biosynthesis; lipid IV(A) from (3R)-3-hydroxytetradecanoyl-[acyl-carrier-protein] and UDP-N-acetyl-alpha-D-glucosamine: step 6/6.</text>
</comment>
<comment type="similarity">
    <text evidence="1">Belongs to the LpxK family.</text>
</comment>
<feature type="chain" id="PRO_0000340865" description="Tetraacyldisaccharide 4'-kinase">
    <location>
        <begin position="1"/>
        <end position="381"/>
    </location>
</feature>
<feature type="binding site" evidence="1">
    <location>
        <begin position="78"/>
        <end position="85"/>
    </location>
    <ligand>
        <name>ATP</name>
        <dbReference type="ChEBI" id="CHEBI:30616"/>
    </ligand>
</feature>
<name>LPXK_SYNFM</name>
<organism>
    <name type="scientific">Syntrophobacter fumaroxidans (strain DSM 10017 / MPOB)</name>
    <dbReference type="NCBI Taxonomy" id="335543"/>
    <lineage>
        <taxon>Bacteria</taxon>
        <taxon>Pseudomonadati</taxon>
        <taxon>Thermodesulfobacteriota</taxon>
        <taxon>Syntrophobacteria</taxon>
        <taxon>Syntrophobacterales</taxon>
        <taxon>Syntrophobacteraceae</taxon>
        <taxon>Syntrophobacter</taxon>
    </lineage>
</organism>
<gene>
    <name evidence="1" type="primary">lpxK</name>
    <name type="ordered locus">Sfum_0346</name>
</gene>